<comment type="function">
    <text evidence="1">May play a role in photosystem I and II biogenesis.</text>
</comment>
<comment type="subcellular location">
    <subcellularLocation>
        <location evidence="1">Plastid</location>
        <location evidence="1">Chloroplast thylakoid membrane</location>
        <topology evidence="1">Single-pass membrane protein</topology>
    </subcellularLocation>
</comment>
<comment type="similarity">
    <text evidence="1">Belongs to the PsbN family.</text>
</comment>
<comment type="caution">
    <text evidence="1">Originally thought to be a component of PSII; based on experiments in Synechocystis, N.tabacum and barley, and its absence from PSII in T.elongatus and T.vulcanus, this is probably not true.</text>
</comment>
<feature type="chain" id="PRO_0000362199" description="Protein PsbN">
    <location>
        <begin position="1"/>
        <end position="43"/>
    </location>
</feature>
<feature type="transmembrane region" description="Helical" evidence="1">
    <location>
        <begin position="7"/>
        <end position="27"/>
    </location>
</feature>
<evidence type="ECO:0000255" key="1">
    <source>
        <dbReference type="HAMAP-Rule" id="MF_00293"/>
    </source>
</evidence>
<proteinExistence type="inferred from homology"/>
<keyword id="KW-0150">Chloroplast</keyword>
<keyword id="KW-0472">Membrane</keyword>
<keyword id="KW-0934">Plastid</keyword>
<keyword id="KW-0793">Thylakoid</keyword>
<keyword id="KW-0812">Transmembrane</keyword>
<keyword id="KW-1133">Transmembrane helix</keyword>
<dbReference type="EMBL" id="AP009374">
    <property type="protein sequence ID" value="BAF50489.1"/>
    <property type="molecule type" value="Genomic_DNA"/>
</dbReference>
<dbReference type="RefSeq" id="YP_001123665.1">
    <property type="nucleotide sequence ID" value="NC_009273.1"/>
</dbReference>
<dbReference type="SMR" id="A4QLD4"/>
<dbReference type="GeneID" id="4961976"/>
<dbReference type="GO" id="GO:0009535">
    <property type="term" value="C:chloroplast thylakoid membrane"/>
    <property type="evidence" value="ECO:0007669"/>
    <property type="project" value="UniProtKB-SubCell"/>
</dbReference>
<dbReference type="GO" id="GO:0015979">
    <property type="term" value="P:photosynthesis"/>
    <property type="evidence" value="ECO:0007669"/>
    <property type="project" value="InterPro"/>
</dbReference>
<dbReference type="HAMAP" id="MF_00293">
    <property type="entry name" value="PSII_PsbN"/>
    <property type="match status" value="1"/>
</dbReference>
<dbReference type="InterPro" id="IPR003398">
    <property type="entry name" value="PSII_PsbN"/>
</dbReference>
<dbReference type="PANTHER" id="PTHR35326">
    <property type="entry name" value="PROTEIN PSBN"/>
    <property type="match status" value="1"/>
</dbReference>
<dbReference type="PANTHER" id="PTHR35326:SF3">
    <property type="entry name" value="PROTEIN PSBN"/>
    <property type="match status" value="1"/>
</dbReference>
<dbReference type="Pfam" id="PF02468">
    <property type="entry name" value="PsbN"/>
    <property type="match status" value="1"/>
</dbReference>
<gene>
    <name evidence="1" type="primary">psbN</name>
</gene>
<reference key="1">
    <citation type="submission" date="2007-03" db="EMBL/GenBank/DDBJ databases">
        <title>Sequencing analysis of Lepidium virginicum JO26 chloroplast DNA.</title>
        <authorList>
            <person name="Hosouchi T."/>
            <person name="Tsuruoka H."/>
            <person name="Kotani H."/>
        </authorList>
    </citation>
    <scope>NUCLEOTIDE SEQUENCE [LARGE SCALE GENOMIC DNA]</scope>
</reference>
<organism>
    <name type="scientific">Lepidium virginicum</name>
    <name type="common">Virginia pepperweed</name>
    <dbReference type="NCBI Taxonomy" id="59292"/>
    <lineage>
        <taxon>Eukaryota</taxon>
        <taxon>Viridiplantae</taxon>
        <taxon>Streptophyta</taxon>
        <taxon>Embryophyta</taxon>
        <taxon>Tracheophyta</taxon>
        <taxon>Spermatophyta</taxon>
        <taxon>Magnoliopsida</taxon>
        <taxon>eudicotyledons</taxon>
        <taxon>Gunneridae</taxon>
        <taxon>Pentapetalae</taxon>
        <taxon>rosids</taxon>
        <taxon>malvids</taxon>
        <taxon>Brassicales</taxon>
        <taxon>Brassicaceae</taxon>
        <taxon>Lepidieae</taxon>
        <taxon>Lepidium</taxon>
    </lineage>
</organism>
<name>PSBN_LEPVR</name>
<accession>A4QLD4</accession>
<sequence length="43" mass="4722">METATLVAIFISGLLVSFTGYALYTAFGQPSQQLRDPFEEHGD</sequence>
<protein>
    <recommendedName>
        <fullName evidence="1">Protein PsbN</fullName>
    </recommendedName>
</protein>
<geneLocation type="chloroplast"/>